<accession>P46714</accession>
<reference key="1">
    <citation type="submission" date="1994-03" db="EMBL/GenBank/DDBJ databases">
        <authorList>
            <person name="Smith D.R."/>
            <person name="Robison K."/>
        </authorList>
    </citation>
    <scope>NUCLEOTIDE SEQUENCE [GENOMIC DNA]</scope>
</reference>
<reference key="2">
    <citation type="journal article" date="2001" name="Nature">
        <title>Massive gene decay in the leprosy bacillus.</title>
        <authorList>
            <person name="Cole S.T."/>
            <person name="Eiglmeier K."/>
            <person name="Parkhill J."/>
            <person name="James K.D."/>
            <person name="Thomson N.R."/>
            <person name="Wheeler P.R."/>
            <person name="Honore N."/>
            <person name="Garnier T."/>
            <person name="Churcher C.M."/>
            <person name="Harris D.E."/>
            <person name="Mungall K.L."/>
            <person name="Basham D."/>
            <person name="Brown D."/>
            <person name="Chillingworth T."/>
            <person name="Connor R."/>
            <person name="Davies R.M."/>
            <person name="Devlin K."/>
            <person name="Duthoy S."/>
            <person name="Feltwell T."/>
            <person name="Fraser A."/>
            <person name="Hamlin N."/>
            <person name="Holroyd S."/>
            <person name="Hornsby T."/>
            <person name="Jagels K."/>
            <person name="Lacroix C."/>
            <person name="Maclean J."/>
            <person name="Moule S."/>
            <person name="Murphy L.D."/>
            <person name="Oliver K."/>
            <person name="Quail M.A."/>
            <person name="Rajandream M.A."/>
            <person name="Rutherford K.M."/>
            <person name="Rutter S."/>
            <person name="Seeger K."/>
            <person name="Simon S."/>
            <person name="Simmonds M."/>
            <person name="Skelton J."/>
            <person name="Squares R."/>
            <person name="Squares S."/>
            <person name="Stevens K."/>
            <person name="Taylor K."/>
            <person name="Whitehead S."/>
            <person name="Woodward J.R."/>
            <person name="Barrell B.G."/>
        </authorList>
    </citation>
    <scope>NUCLEOTIDE SEQUENCE [LARGE SCALE GENOMIC DNA]</scope>
    <source>
        <strain>TN</strain>
    </source>
</reference>
<name>NADC_MYCLE</name>
<evidence type="ECO:0000250" key="1"/>
<evidence type="ECO:0000305" key="2"/>
<comment type="function">
    <text evidence="1">Involved in the catabolism of quinolinic acid (QA).</text>
</comment>
<comment type="catalytic activity">
    <reaction>
        <text>nicotinate beta-D-ribonucleotide + CO2 + diphosphate = quinolinate + 5-phospho-alpha-D-ribose 1-diphosphate + 2 H(+)</text>
        <dbReference type="Rhea" id="RHEA:12733"/>
        <dbReference type="ChEBI" id="CHEBI:15378"/>
        <dbReference type="ChEBI" id="CHEBI:16526"/>
        <dbReference type="ChEBI" id="CHEBI:29959"/>
        <dbReference type="ChEBI" id="CHEBI:33019"/>
        <dbReference type="ChEBI" id="CHEBI:57502"/>
        <dbReference type="ChEBI" id="CHEBI:58017"/>
        <dbReference type="EC" id="2.4.2.19"/>
    </reaction>
</comment>
<comment type="pathway">
    <text>Cofactor biosynthesis; NAD(+) biosynthesis; nicotinate D-ribonucleotide from quinolinate: step 1/1.</text>
</comment>
<comment type="subunit">
    <text evidence="1">Hexamer formed by 3 homodimers.</text>
</comment>
<comment type="similarity">
    <text evidence="2">Belongs to the NadC/ModD family.</text>
</comment>
<comment type="sequence caution" evidence="2">
    <conflict type="erroneous initiation">
        <sequence resource="EMBL-CDS" id="CAC31608"/>
    </conflict>
</comment>
<sequence>MLSDCEFDAARDTIRRALHEDLRYGLDITTQATVPAGTVVTGSMVPREPGVIAGVDVALLVLDEVFGVDGYRVLYRVEDGARLQSGQPLLTVQAAARGLLTAERTMLNLVCHMSGIATVTVAWVDAVRGTKAKIRDTRKTLPGLRALQKYAVRVGGGVNHRLGLGDTALIKDNHVAAVGSVVDALRAVRAAAPELPCEVEVDSLEQLDAMLAEEPELILLDNFPVWQTQVAVQRRDIRAPTVLLESSGGLSLENAAIYAGTGVDYLAVGALTHSVRILDIGLDL</sequence>
<keyword id="KW-0328">Glycosyltransferase</keyword>
<keyword id="KW-0662">Pyridine nucleotide biosynthesis</keyword>
<keyword id="KW-1185">Reference proteome</keyword>
<keyword id="KW-0808">Transferase</keyword>
<protein>
    <recommendedName>
        <fullName>Nicotinate-nucleotide pyrophosphorylase [carboxylating]</fullName>
        <ecNumber>2.4.2.19</ecNumber>
    </recommendedName>
    <alternativeName>
        <fullName>Quinolinate phosphoribosyltransferase [decarboxylating]</fullName>
        <shortName>QAPRTase</shortName>
    </alternativeName>
</protein>
<feature type="chain" id="PRO_0000155945" description="Nicotinate-nucleotide pyrophosphorylase [carboxylating]">
    <location>
        <begin position="1"/>
        <end position="284"/>
    </location>
</feature>
<feature type="binding site" evidence="1">
    <location>
        <position position="104"/>
    </location>
    <ligand>
        <name>substrate</name>
    </ligand>
</feature>
<feature type="binding site" evidence="1">
    <location>
        <begin position="137"/>
        <end position="139"/>
    </location>
    <ligand>
        <name>substrate</name>
    </ligand>
</feature>
<feature type="binding site" evidence="1">
    <location>
        <position position="161"/>
    </location>
    <ligand>
        <name>substrate</name>
    </ligand>
</feature>
<feature type="binding site" evidence="1">
    <location>
        <position position="171"/>
    </location>
    <ligand>
        <name>substrate</name>
    </ligand>
</feature>
<feature type="binding site" evidence="1">
    <location>
        <position position="200"/>
    </location>
    <ligand>
        <name>substrate</name>
    </ligand>
</feature>
<feature type="binding site" evidence="1">
    <location>
        <position position="221"/>
    </location>
    <ligand>
        <name>substrate</name>
    </ligand>
</feature>
<feature type="binding site" evidence="1">
    <location>
        <begin position="247"/>
        <end position="249"/>
    </location>
    <ligand>
        <name>substrate</name>
    </ligand>
</feature>
<feature type="binding site" evidence="1">
    <location>
        <begin position="268"/>
        <end position="270"/>
    </location>
    <ligand>
        <name>substrate</name>
    </ligand>
</feature>
<gene>
    <name type="primary">nadC</name>
    <name type="ordered locus">ML1227</name>
    <name type="ORF">B1170_C1_168</name>
</gene>
<dbReference type="EC" id="2.4.2.19"/>
<dbReference type="EMBL" id="U00010">
    <property type="protein sequence ID" value="AAA17060.1"/>
    <property type="molecule type" value="Genomic_DNA"/>
</dbReference>
<dbReference type="EMBL" id="AL583921">
    <property type="protein sequence ID" value="CAC31608.1"/>
    <property type="status" value="ALT_INIT"/>
    <property type="molecule type" value="Genomic_DNA"/>
</dbReference>
<dbReference type="PIR" id="E87062">
    <property type="entry name" value="E87062"/>
</dbReference>
<dbReference type="PIR" id="S72696">
    <property type="entry name" value="S72696"/>
</dbReference>
<dbReference type="SMR" id="P46714"/>
<dbReference type="STRING" id="272631.gene:17575058"/>
<dbReference type="KEGG" id="mle:ML1227"/>
<dbReference type="Leproma" id="ML1227"/>
<dbReference type="eggNOG" id="COG0157">
    <property type="taxonomic scope" value="Bacteria"/>
</dbReference>
<dbReference type="HOGENOM" id="CLU_039622_0_0_11"/>
<dbReference type="UniPathway" id="UPA00253">
    <property type="reaction ID" value="UER00331"/>
</dbReference>
<dbReference type="Proteomes" id="UP000000806">
    <property type="component" value="Chromosome"/>
</dbReference>
<dbReference type="GO" id="GO:0005737">
    <property type="term" value="C:cytoplasm"/>
    <property type="evidence" value="ECO:0007669"/>
    <property type="project" value="TreeGrafter"/>
</dbReference>
<dbReference type="GO" id="GO:0004514">
    <property type="term" value="F:nicotinate-nucleotide diphosphorylase (carboxylating) activity"/>
    <property type="evidence" value="ECO:0007669"/>
    <property type="project" value="UniProtKB-EC"/>
</dbReference>
<dbReference type="GO" id="GO:0009435">
    <property type="term" value="P:NAD biosynthetic process"/>
    <property type="evidence" value="ECO:0007669"/>
    <property type="project" value="UniProtKB-UniPathway"/>
</dbReference>
<dbReference type="GO" id="GO:0034213">
    <property type="term" value="P:quinolinate catabolic process"/>
    <property type="evidence" value="ECO:0007669"/>
    <property type="project" value="TreeGrafter"/>
</dbReference>
<dbReference type="CDD" id="cd01572">
    <property type="entry name" value="QPRTase"/>
    <property type="match status" value="1"/>
</dbReference>
<dbReference type="FunFam" id="3.20.20.70:FF:000030">
    <property type="entry name" value="Nicotinate-nucleotide pyrophosphorylase, carboxylating"/>
    <property type="match status" value="1"/>
</dbReference>
<dbReference type="Gene3D" id="3.20.20.70">
    <property type="entry name" value="Aldolase class I"/>
    <property type="match status" value="1"/>
</dbReference>
<dbReference type="Gene3D" id="3.90.1170.20">
    <property type="entry name" value="Quinolinate phosphoribosyl transferase, N-terminal domain"/>
    <property type="match status" value="1"/>
</dbReference>
<dbReference type="InterPro" id="IPR013785">
    <property type="entry name" value="Aldolase_TIM"/>
</dbReference>
<dbReference type="InterPro" id="IPR004393">
    <property type="entry name" value="NadC"/>
</dbReference>
<dbReference type="InterPro" id="IPR027277">
    <property type="entry name" value="NadC/ModD"/>
</dbReference>
<dbReference type="InterPro" id="IPR036068">
    <property type="entry name" value="Nicotinate_pribotase-like_C"/>
</dbReference>
<dbReference type="InterPro" id="IPR037128">
    <property type="entry name" value="Quinolinate_PRibosylTase_N_sf"/>
</dbReference>
<dbReference type="InterPro" id="IPR002638">
    <property type="entry name" value="Quinolinate_PRibosylTrfase_C"/>
</dbReference>
<dbReference type="InterPro" id="IPR022412">
    <property type="entry name" value="Quinolinate_PRibosylTrfase_N"/>
</dbReference>
<dbReference type="NCBIfam" id="TIGR00078">
    <property type="entry name" value="nadC"/>
    <property type="match status" value="1"/>
</dbReference>
<dbReference type="PANTHER" id="PTHR32179">
    <property type="entry name" value="NICOTINATE-NUCLEOTIDE PYROPHOSPHORYLASE [CARBOXYLATING]"/>
    <property type="match status" value="1"/>
</dbReference>
<dbReference type="PANTHER" id="PTHR32179:SF3">
    <property type="entry name" value="NICOTINATE-NUCLEOTIDE PYROPHOSPHORYLASE [CARBOXYLATING]"/>
    <property type="match status" value="1"/>
</dbReference>
<dbReference type="Pfam" id="PF01729">
    <property type="entry name" value="QRPTase_C"/>
    <property type="match status" value="1"/>
</dbReference>
<dbReference type="Pfam" id="PF02749">
    <property type="entry name" value="QRPTase_N"/>
    <property type="match status" value="1"/>
</dbReference>
<dbReference type="PIRSF" id="PIRSF006250">
    <property type="entry name" value="NadC_ModD"/>
    <property type="match status" value="1"/>
</dbReference>
<dbReference type="SUPFAM" id="SSF51690">
    <property type="entry name" value="Nicotinate/Quinolinate PRTase C-terminal domain-like"/>
    <property type="match status" value="1"/>
</dbReference>
<dbReference type="SUPFAM" id="SSF54675">
    <property type="entry name" value="Nicotinate/Quinolinate PRTase N-terminal domain-like"/>
    <property type="match status" value="1"/>
</dbReference>
<organism>
    <name type="scientific">Mycobacterium leprae (strain TN)</name>
    <dbReference type="NCBI Taxonomy" id="272631"/>
    <lineage>
        <taxon>Bacteria</taxon>
        <taxon>Bacillati</taxon>
        <taxon>Actinomycetota</taxon>
        <taxon>Actinomycetes</taxon>
        <taxon>Mycobacteriales</taxon>
        <taxon>Mycobacteriaceae</taxon>
        <taxon>Mycobacterium</taxon>
    </lineage>
</organism>
<proteinExistence type="inferred from homology"/>